<reference key="1">
    <citation type="journal article" date="2006" name="Nat. Biotechnol.">
        <title>Complete genome sequence of the entomopathogenic and metabolically versatile soil bacterium Pseudomonas entomophila.</title>
        <authorList>
            <person name="Vodovar N."/>
            <person name="Vallenet D."/>
            <person name="Cruveiller S."/>
            <person name="Rouy Z."/>
            <person name="Barbe V."/>
            <person name="Acosta C."/>
            <person name="Cattolico L."/>
            <person name="Jubin C."/>
            <person name="Lajus A."/>
            <person name="Segurens B."/>
            <person name="Vacherie B."/>
            <person name="Wincker P."/>
            <person name="Weissenbach J."/>
            <person name="Lemaitre B."/>
            <person name="Medigue C."/>
            <person name="Boccard F."/>
        </authorList>
    </citation>
    <scope>NUCLEOTIDE SEQUENCE [LARGE SCALE GENOMIC DNA]</scope>
    <source>
        <strain>L48</strain>
    </source>
</reference>
<evidence type="ECO:0000255" key="1">
    <source>
        <dbReference type="HAMAP-Rule" id="MF_00315"/>
    </source>
</evidence>
<gene>
    <name evidence="1" type="primary">dxs</name>
    <name type="ordered locus">PSEEN0600</name>
</gene>
<feature type="chain" id="PRO_1000019063" description="1-deoxy-D-xylulose-5-phosphate synthase">
    <location>
        <begin position="1"/>
        <end position="631"/>
    </location>
</feature>
<feature type="binding site" evidence="1">
    <location>
        <position position="87"/>
    </location>
    <ligand>
        <name>thiamine diphosphate</name>
        <dbReference type="ChEBI" id="CHEBI:58937"/>
    </ligand>
</feature>
<feature type="binding site" evidence="1">
    <location>
        <begin position="128"/>
        <end position="130"/>
    </location>
    <ligand>
        <name>thiamine diphosphate</name>
        <dbReference type="ChEBI" id="CHEBI:58937"/>
    </ligand>
</feature>
<feature type="binding site" evidence="1">
    <location>
        <position position="159"/>
    </location>
    <ligand>
        <name>Mg(2+)</name>
        <dbReference type="ChEBI" id="CHEBI:18420"/>
    </ligand>
</feature>
<feature type="binding site" evidence="1">
    <location>
        <begin position="160"/>
        <end position="161"/>
    </location>
    <ligand>
        <name>thiamine diphosphate</name>
        <dbReference type="ChEBI" id="CHEBI:58937"/>
    </ligand>
</feature>
<feature type="binding site" evidence="1">
    <location>
        <position position="188"/>
    </location>
    <ligand>
        <name>Mg(2+)</name>
        <dbReference type="ChEBI" id="CHEBI:18420"/>
    </ligand>
</feature>
<feature type="binding site" evidence="1">
    <location>
        <position position="188"/>
    </location>
    <ligand>
        <name>thiamine diphosphate</name>
        <dbReference type="ChEBI" id="CHEBI:58937"/>
    </ligand>
</feature>
<feature type="binding site" evidence="1">
    <location>
        <position position="295"/>
    </location>
    <ligand>
        <name>thiamine diphosphate</name>
        <dbReference type="ChEBI" id="CHEBI:58937"/>
    </ligand>
</feature>
<feature type="binding site" evidence="1">
    <location>
        <position position="377"/>
    </location>
    <ligand>
        <name>thiamine diphosphate</name>
        <dbReference type="ChEBI" id="CHEBI:58937"/>
    </ligand>
</feature>
<comment type="function">
    <text evidence="1">Catalyzes the acyloin condensation reaction between C atoms 2 and 3 of pyruvate and glyceraldehyde 3-phosphate to yield 1-deoxy-D-xylulose-5-phosphate (DXP).</text>
</comment>
<comment type="catalytic activity">
    <reaction evidence="1">
        <text>D-glyceraldehyde 3-phosphate + pyruvate + H(+) = 1-deoxy-D-xylulose 5-phosphate + CO2</text>
        <dbReference type="Rhea" id="RHEA:12605"/>
        <dbReference type="ChEBI" id="CHEBI:15361"/>
        <dbReference type="ChEBI" id="CHEBI:15378"/>
        <dbReference type="ChEBI" id="CHEBI:16526"/>
        <dbReference type="ChEBI" id="CHEBI:57792"/>
        <dbReference type="ChEBI" id="CHEBI:59776"/>
        <dbReference type="EC" id="2.2.1.7"/>
    </reaction>
</comment>
<comment type="cofactor">
    <cofactor evidence="1">
        <name>Mg(2+)</name>
        <dbReference type="ChEBI" id="CHEBI:18420"/>
    </cofactor>
    <text evidence="1">Binds 1 Mg(2+) ion per subunit.</text>
</comment>
<comment type="cofactor">
    <cofactor evidence="1">
        <name>thiamine diphosphate</name>
        <dbReference type="ChEBI" id="CHEBI:58937"/>
    </cofactor>
    <text evidence="1">Binds 1 thiamine pyrophosphate per subunit.</text>
</comment>
<comment type="pathway">
    <text evidence="1">Metabolic intermediate biosynthesis; 1-deoxy-D-xylulose 5-phosphate biosynthesis; 1-deoxy-D-xylulose 5-phosphate from D-glyceraldehyde 3-phosphate and pyruvate: step 1/1.</text>
</comment>
<comment type="subunit">
    <text evidence="1">Homodimer.</text>
</comment>
<comment type="similarity">
    <text evidence="1">Belongs to the transketolase family. DXPS subfamily.</text>
</comment>
<accession>Q1IFL1</accession>
<proteinExistence type="inferred from homology"/>
<protein>
    <recommendedName>
        <fullName evidence="1">1-deoxy-D-xylulose-5-phosphate synthase</fullName>
        <ecNumber evidence="1">2.2.1.7</ecNumber>
    </recommendedName>
    <alternativeName>
        <fullName evidence="1">1-deoxyxylulose-5-phosphate synthase</fullName>
        <shortName evidence="1">DXP synthase</shortName>
        <shortName evidence="1">DXPS</shortName>
    </alternativeName>
</protein>
<name>DXS_PSEE4</name>
<keyword id="KW-0414">Isoprene biosynthesis</keyword>
<keyword id="KW-0460">Magnesium</keyword>
<keyword id="KW-0479">Metal-binding</keyword>
<keyword id="KW-0784">Thiamine biosynthesis</keyword>
<keyword id="KW-0786">Thiamine pyrophosphate</keyword>
<keyword id="KW-0808">Transferase</keyword>
<organism>
    <name type="scientific">Pseudomonas entomophila (strain L48)</name>
    <dbReference type="NCBI Taxonomy" id="384676"/>
    <lineage>
        <taxon>Bacteria</taxon>
        <taxon>Pseudomonadati</taxon>
        <taxon>Pseudomonadota</taxon>
        <taxon>Gammaproteobacteria</taxon>
        <taxon>Pseudomonadales</taxon>
        <taxon>Pseudomonadaceae</taxon>
        <taxon>Pseudomonas</taxon>
    </lineage>
</organism>
<dbReference type="EC" id="2.2.1.7" evidence="1"/>
<dbReference type="EMBL" id="CT573326">
    <property type="protein sequence ID" value="CAK13543.1"/>
    <property type="molecule type" value="Genomic_DNA"/>
</dbReference>
<dbReference type="RefSeq" id="WP_011531976.1">
    <property type="nucleotide sequence ID" value="NC_008027.1"/>
</dbReference>
<dbReference type="SMR" id="Q1IFL1"/>
<dbReference type="STRING" id="384676.PSEEN0600"/>
<dbReference type="GeneID" id="32803929"/>
<dbReference type="KEGG" id="pen:PSEEN0600"/>
<dbReference type="eggNOG" id="COG1154">
    <property type="taxonomic scope" value="Bacteria"/>
</dbReference>
<dbReference type="HOGENOM" id="CLU_009227_1_4_6"/>
<dbReference type="OrthoDB" id="9803371at2"/>
<dbReference type="UniPathway" id="UPA00064">
    <property type="reaction ID" value="UER00091"/>
</dbReference>
<dbReference type="Proteomes" id="UP000000658">
    <property type="component" value="Chromosome"/>
</dbReference>
<dbReference type="GO" id="GO:0005829">
    <property type="term" value="C:cytosol"/>
    <property type="evidence" value="ECO:0007669"/>
    <property type="project" value="TreeGrafter"/>
</dbReference>
<dbReference type="GO" id="GO:0008661">
    <property type="term" value="F:1-deoxy-D-xylulose-5-phosphate synthase activity"/>
    <property type="evidence" value="ECO:0007669"/>
    <property type="project" value="UniProtKB-UniRule"/>
</dbReference>
<dbReference type="GO" id="GO:0000287">
    <property type="term" value="F:magnesium ion binding"/>
    <property type="evidence" value="ECO:0007669"/>
    <property type="project" value="UniProtKB-UniRule"/>
</dbReference>
<dbReference type="GO" id="GO:0030976">
    <property type="term" value="F:thiamine pyrophosphate binding"/>
    <property type="evidence" value="ECO:0007669"/>
    <property type="project" value="UniProtKB-UniRule"/>
</dbReference>
<dbReference type="GO" id="GO:0052865">
    <property type="term" value="P:1-deoxy-D-xylulose 5-phosphate biosynthetic process"/>
    <property type="evidence" value="ECO:0007669"/>
    <property type="project" value="UniProtKB-UniPathway"/>
</dbReference>
<dbReference type="GO" id="GO:0019288">
    <property type="term" value="P:isopentenyl diphosphate biosynthetic process, methylerythritol 4-phosphate pathway"/>
    <property type="evidence" value="ECO:0007669"/>
    <property type="project" value="TreeGrafter"/>
</dbReference>
<dbReference type="GO" id="GO:0016114">
    <property type="term" value="P:terpenoid biosynthetic process"/>
    <property type="evidence" value="ECO:0007669"/>
    <property type="project" value="UniProtKB-UniRule"/>
</dbReference>
<dbReference type="GO" id="GO:0009228">
    <property type="term" value="P:thiamine biosynthetic process"/>
    <property type="evidence" value="ECO:0007669"/>
    <property type="project" value="UniProtKB-UniRule"/>
</dbReference>
<dbReference type="CDD" id="cd02007">
    <property type="entry name" value="TPP_DXS"/>
    <property type="match status" value="1"/>
</dbReference>
<dbReference type="CDD" id="cd07033">
    <property type="entry name" value="TPP_PYR_DXS_TK_like"/>
    <property type="match status" value="1"/>
</dbReference>
<dbReference type="FunFam" id="3.40.50.920:FF:000002">
    <property type="entry name" value="1-deoxy-D-xylulose-5-phosphate synthase"/>
    <property type="match status" value="1"/>
</dbReference>
<dbReference type="FunFam" id="3.40.50.970:FF:000005">
    <property type="entry name" value="1-deoxy-D-xylulose-5-phosphate synthase"/>
    <property type="match status" value="1"/>
</dbReference>
<dbReference type="Gene3D" id="3.40.50.920">
    <property type="match status" value="1"/>
</dbReference>
<dbReference type="Gene3D" id="3.40.50.970">
    <property type="match status" value="2"/>
</dbReference>
<dbReference type="HAMAP" id="MF_00315">
    <property type="entry name" value="DXP_synth"/>
    <property type="match status" value="1"/>
</dbReference>
<dbReference type="InterPro" id="IPR005477">
    <property type="entry name" value="Dxylulose-5-P_synthase"/>
</dbReference>
<dbReference type="InterPro" id="IPR029061">
    <property type="entry name" value="THDP-binding"/>
</dbReference>
<dbReference type="InterPro" id="IPR009014">
    <property type="entry name" value="Transketo_C/PFOR_II"/>
</dbReference>
<dbReference type="InterPro" id="IPR005475">
    <property type="entry name" value="Transketolase-like_Pyr-bd"/>
</dbReference>
<dbReference type="InterPro" id="IPR020826">
    <property type="entry name" value="Transketolase_BS"/>
</dbReference>
<dbReference type="InterPro" id="IPR033248">
    <property type="entry name" value="Transketolase_C"/>
</dbReference>
<dbReference type="NCBIfam" id="TIGR00204">
    <property type="entry name" value="dxs"/>
    <property type="match status" value="1"/>
</dbReference>
<dbReference type="NCBIfam" id="NF003933">
    <property type="entry name" value="PRK05444.2-2"/>
    <property type="match status" value="1"/>
</dbReference>
<dbReference type="PANTHER" id="PTHR43322">
    <property type="entry name" value="1-D-DEOXYXYLULOSE 5-PHOSPHATE SYNTHASE-RELATED"/>
    <property type="match status" value="1"/>
</dbReference>
<dbReference type="PANTHER" id="PTHR43322:SF5">
    <property type="entry name" value="1-DEOXY-D-XYLULOSE-5-PHOSPHATE SYNTHASE, CHLOROPLASTIC"/>
    <property type="match status" value="1"/>
</dbReference>
<dbReference type="Pfam" id="PF13292">
    <property type="entry name" value="DXP_synthase_N"/>
    <property type="match status" value="1"/>
</dbReference>
<dbReference type="Pfam" id="PF02779">
    <property type="entry name" value="Transket_pyr"/>
    <property type="match status" value="1"/>
</dbReference>
<dbReference type="Pfam" id="PF02780">
    <property type="entry name" value="Transketolase_C"/>
    <property type="match status" value="1"/>
</dbReference>
<dbReference type="SMART" id="SM00861">
    <property type="entry name" value="Transket_pyr"/>
    <property type="match status" value="1"/>
</dbReference>
<dbReference type="SUPFAM" id="SSF52518">
    <property type="entry name" value="Thiamin diphosphate-binding fold (THDP-binding)"/>
    <property type="match status" value="2"/>
</dbReference>
<dbReference type="SUPFAM" id="SSF52922">
    <property type="entry name" value="TK C-terminal domain-like"/>
    <property type="match status" value="1"/>
</dbReference>
<dbReference type="PROSITE" id="PS00802">
    <property type="entry name" value="TRANSKETOLASE_2"/>
    <property type="match status" value="1"/>
</dbReference>
<sequence>MPTTFQEIPRERPVTPLLDRADTPAGLRRLAEADLETLADELRQDLLYTVGQTGGHFGAGLGVIELTIALHYVFDTPDDRLVWDVGHQAYPHKILTGRRDRMLSLRQKDGIAAFPRRSESEYDTFGVGHSSTSISAALGMAIAARLQNDPRKSIAVIGDGALTAGMAFEALNHAQEVDANMLVILNDNDMSISRNVGGLSNYLAKILSSRTYASMREGSKKVLSRLPGAWEIARRTEEYAKGMLVPGTLFEELGWNYIGPIDGHDLPTLIATLRNMRDLKGPQFLHVVTKKGKGFAPAEVDPIGYHAITKLEPADKPVAPKKPSGPKYSAVFGQWLCDMAAADNRLVGITPAMKEGSDLVDFSERYPERYFDVAIAEQHAVTFAAGMACEGAKPVVAIYSTFLQRAYDQLIHDVAVQDLDVLFAIDRAGLVGEDGPTHAGAYDLSYLRCIPGMLVMTPSDENELRKMLSTGHHYKGPAAVRYPRGTGPNAPISGDLEPLEIGKGVVRRQGGKVALLVFGVQLTEALQVAEQIDATVVDMRFVKPLDEALVLEMAAGHELLVTIEENAIMGGAGAAVGEFLAREGVVKPLLHLGLPDIYVEHAKPAQMLAECGLDAAGIEASVKARMAKLGL</sequence>